<proteinExistence type="inferred from homology"/>
<name>TAM_RHOJR</name>
<comment type="function">
    <text evidence="1">Catalyzes the S-adenosylmethionine monomethyl esterification of trans-aconitate.</text>
</comment>
<comment type="catalytic activity">
    <reaction evidence="1">
        <text>trans-aconitate + S-adenosyl-L-methionine = (E)-3-(methoxycarbonyl)pent-2-enedioate + S-adenosyl-L-homocysteine</text>
        <dbReference type="Rhea" id="RHEA:14969"/>
        <dbReference type="ChEBI" id="CHEBI:15708"/>
        <dbReference type="ChEBI" id="CHEBI:57470"/>
        <dbReference type="ChEBI" id="CHEBI:57856"/>
        <dbReference type="ChEBI" id="CHEBI:59789"/>
        <dbReference type="EC" id="2.1.1.144"/>
    </reaction>
</comment>
<comment type="subcellular location">
    <subcellularLocation>
        <location evidence="1">Cytoplasm</location>
    </subcellularLocation>
</comment>
<comment type="similarity">
    <text evidence="1">Belongs to the methyltransferase superfamily. Tam family.</text>
</comment>
<evidence type="ECO:0000255" key="1">
    <source>
        <dbReference type="HAMAP-Rule" id="MF_00560"/>
    </source>
</evidence>
<accession>Q0SED2</accession>
<gene>
    <name evidence="1" type="primary">tam</name>
    <name type="ordered locus">RHA1_ro02298</name>
</gene>
<sequence length="254" mass="28559">MWDPNKYLAFADHRGRPFYELLSRVDARSPRRVVDLGCGPGNLTVSLAERWPDAVLEASDSSPEMVEAARERGLDAGRQDVRDWTPKPDTDVVVSNAALQWVPEHRELLRRWPTQLPSGAWIAVQVPGNFDAPSHTIVRDLASRERWSRSLPDVPFRASTVVDDPADYAGLLADAGCAVDAWETTYVQRLTGENPVLEWITGTALRPVKDALSAPEWDLFREELAPLLDEAYPRRPDGSTFFPFRRIFVVAQVQ</sequence>
<keyword id="KW-0963">Cytoplasm</keyword>
<keyword id="KW-0489">Methyltransferase</keyword>
<keyword id="KW-0949">S-adenosyl-L-methionine</keyword>
<keyword id="KW-0808">Transferase</keyword>
<feature type="chain" id="PRO_1000056579" description="Trans-aconitate 2-methyltransferase">
    <location>
        <begin position="1"/>
        <end position="254"/>
    </location>
</feature>
<protein>
    <recommendedName>
        <fullName evidence="1">Trans-aconitate 2-methyltransferase</fullName>
        <ecNumber evidence="1">2.1.1.144</ecNumber>
    </recommendedName>
</protein>
<reference key="1">
    <citation type="journal article" date="2006" name="Proc. Natl. Acad. Sci. U.S.A.">
        <title>The complete genome of Rhodococcus sp. RHA1 provides insights into a catabolic powerhouse.</title>
        <authorList>
            <person name="McLeod M.P."/>
            <person name="Warren R.L."/>
            <person name="Hsiao W.W.L."/>
            <person name="Araki N."/>
            <person name="Myhre M."/>
            <person name="Fernandes C."/>
            <person name="Miyazawa D."/>
            <person name="Wong W."/>
            <person name="Lillquist A.L."/>
            <person name="Wang D."/>
            <person name="Dosanjh M."/>
            <person name="Hara H."/>
            <person name="Petrescu A."/>
            <person name="Morin R.D."/>
            <person name="Yang G."/>
            <person name="Stott J.M."/>
            <person name="Schein J.E."/>
            <person name="Shin H."/>
            <person name="Smailus D."/>
            <person name="Siddiqui A.S."/>
            <person name="Marra M.A."/>
            <person name="Jones S.J.M."/>
            <person name="Holt R."/>
            <person name="Brinkman F.S.L."/>
            <person name="Miyauchi K."/>
            <person name="Fukuda M."/>
            <person name="Davies J.E."/>
            <person name="Mohn W.W."/>
            <person name="Eltis L.D."/>
        </authorList>
    </citation>
    <scope>NUCLEOTIDE SEQUENCE [LARGE SCALE GENOMIC DNA]</scope>
    <source>
        <strain>RHA1</strain>
    </source>
</reference>
<dbReference type="EC" id="2.1.1.144" evidence="1"/>
<dbReference type="EMBL" id="CP000431">
    <property type="protein sequence ID" value="ABG94104.1"/>
    <property type="molecule type" value="Genomic_DNA"/>
</dbReference>
<dbReference type="RefSeq" id="WP_011595076.1">
    <property type="nucleotide sequence ID" value="NC_008268.1"/>
</dbReference>
<dbReference type="SMR" id="Q0SED2"/>
<dbReference type="KEGG" id="rha:RHA1_ro02298"/>
<dbReference type="PATRIC" id="fig|101510.16.peg.2328"/>
<dbReference type="eggNOG" id="COG4106">
    <property type="taxonomic scope" value="Bacteria"/>
</dbReference>
<dbReference type="HOGENOM" id="CLU_037990_5_2_11"/>
<dbReference type="OrthoDB" id="9795085at2"/>
<dbReference type="Proteomes" id="UP000008710">
    <property type="component" value="Chromosome"/>
</dbReference>
<dbReference type="GO" id="GO:0005737">
    <property type="term" value="C:cytoplasm"/>
    <property type="evidence" value="ECO:0007669"/>
    <property type="project" value="UniProtKB-SubCell"/>
</dbReference>
<dbReference type="GO" id="GO:0030798">
    <property type="term" value="F:trans-aconitate 2-methyltransferase activity"/>
    <property type="evidence" value="ECO:0007669"/>
    <property type="project" value="UniProtKB-UniRule"/>
</dbReference>
<dbReference type="GO" id="GO:0032259">
    <property type="term" value="P:methylation"/>
    <property type="evidence" value="ECO:0007669"/>
    <property type="project" value="UniProtKB-KW"/>
</dbReference>
<dbReference type="CDD" id="cd02440">
    <property type="entry name" value="AdoMet_MTases"/>
    <property type="match status" value="1"/>
</dbReference>
<dbReference type="Gene3D" id="1.10.150.290">
    <property type="entry name" value="S-adenosyl-L-methionine-dependent methyltransferases"/>
    <property type="match status" value="1"/>
</dbReference>
<dbReference type="Gene3D" id="3.40.50.150">
    <property type="entry name" value="Vaccinia Virus protein VP39"/>
    <property type="match status" value="1"/>
</dbReference>
<dbReference type="HAMAP" id="MF_00560">
    <property type="entry name" value="Tran_acon_Me_trans"/>
    <property type="match status" value="1"/>
</dbReference>
<dbReference type="InterPro" id="IPR029063">
    <property type="entry name" value="SAM-dependent_MTases_sf"/>
</dbReference>
<dbReference type="InterPro" id="IPR023506">
    <property type="entry name" value="Trans-aconitate_MeTrfase"/>
</dbReference>
<dbReference type="InterPro" id="IPR023149">
    <property type="entry name" value="Trans_acon_MeTrfase_C"/>
</dbReference>
<dbReference type="NCBIfam" id="NF010703">
    <property type="entry name" value="PRK14103.1"/>
    <property type="match status" value="1"/>
</dbReference>
<dbReference type="PANTHER" id="PTHR43861:SF1">
    <property type="entry name" value="TRANS-ACONITATE 2-METHYLTRANSFERASE"/>
    <property type="match status" value="1"/>
</dbReference>
<dbReference type="PANTHER" id="PTHR43861">
    <property type="entry name" value="TRANS-ACONITATE 2-METHYLTRANSFERASE-RELATED"/>
    <property type="match status" value="1"/>
</dbReference>
<dbReference type="Pfam" id="PF13489">
    <property type="entry name" value="Methyltransf_23"/>
    <property type="match status" value="1"/>
</dbReference>
<dbReference type="SUPFAM" id="SSF53335">
    <property type="entry name" value="S-adenosyl-L-methionine-dependent methyltransferases"/>
    <property type="match status" value="1"/>
</dbReference>
<organism>
    <name type="scientific">Rhodococcus jostii (strain RHA1)</name>
    <dbReference type="NCBI Taxonomy" id="101510"/>
    <lineage>
        <taxon>Bacteria</taxon>
        <taxon>Bacillati</taxon>
        <taxon>Actinomycetota</taxon>
        <taxon>Actinomycetes</taxon>
        <taxon>Mycobacteriales</taxon>
        <taxon>Nocardiaceae</taxon>
        <taxon>Rhodococcus</taxon>
    </lineage>
</organism>